<keyword id="KW-0002">3D-structure</keyword>
<keyword id="KW-1185">Reference proteome</keyword>
<keyword id="KW-0687">Ribonucleoprotein</keyword>
<keyword id="KW-0689">Ribosomal protein</keyword>
<feature type="chain" id="PRO_0000133726" description="Large ribosomal subunit protein uL13">
    <location>
        <begin position="1"/>
        <end position="146"/>
    </location>
</feature>
<feature type="helix" evidence="3">
    <location>
        <begin position="14"/>
        <end position="16"/>
    </location>
</feature>
<feature type="strand" evidence="3">
    <location>
        <begin position="21"/>
        <end position="25"/>
    </location>
</feature>
<feature type="helix" evidence="3">
    <location>
        <begin position="31"/>
        <end position="43"/>
    </location>
</feature>
<feature type="turn" evidence="3">
    <location>
        <begin position="44"/>
        <end position="46"/>
    </location>
</feature>
<feature type="strand" evidence="3">
    <location>
        <begin position="52"/>
        <end position="54"/>
    </location>
</feature>
<feature type="strand" evidence="3">
    <location>
        <begin position="59"/>
        <end position="63"/>
    </location>
</feature>
<feature type="helix" evidence="3">
    <location>
        <begin position="65"/>
        <end position="67"/>
    </location>
</feature>
<feature type="helix" evidence="3">
    <location>
        <begin position="74"/>
        <end position="77"/>
    </location>
</feature>
<feature type="strand" evidence="3">
    <location>
        <begin position="79"/>
        <end position="83"/>
    </location>
</feature>
<feature type="strand" evidence="3">
    <location>
        <begin position="90"/>
        <end position="94"/>
    </location>
</feature>
<feature type="helix" evidence="3">
    <location>
        <begin position="95"/>
        <end position="101"/>
    </location>
</feature>
<feature type="helix" evidence="3">
    <location>
        <begin position="105"/>
        <end position="114"/>
    </location>
</feature>
<feature type="helix" evidence="3">
    <location>
        <begin position="119"/>
        <end position="126"/>
    </location>
</feature>
<feature type="strand" evidence="3">
    <location>
        <begin position="128"/>
        <end position="130"/>
    </location>
</feature>
<feature type="strand" evidence="3">
    <location>
        <begin position="132"/>
        <end position="134"/>
    </location>
</feature>
<feature type="helix" evidence="3">
    <location>
        <begin position="139"/>
        <end position="141"/>
    </location>
</feature>
<feature type="strand" evidence="3">
    <location>
        <begin position="144"/>
        <end position="146"/>
    </location>
</feature>
<comment type="function">
    <text evidence="1">This protein is one of the early assembly proteins of the 50S ribosomal subunit, although it is not seen to bind rRNA by itself. It is important during the early stages of 50S assembly.</text>
</comment>
<comment type="subunit">
    <text evidence="1">Part of the 50S ribosomal subunit.</text>
</comment>
<comment type="similarity">
    <text evidence="1">Belongs to the universal ribosomal protein uL13 family.</text>
</comment>
<sequence length="146" mass="16694">MNKITNNDTIWIKPKTVEKKWYVIDAADRILGKVAVDVVKILRGKHKAYYTPHQDLGDNVIIINASKVKLTGKKYQQKLYYRHSRYPGGLYSDTFRTLSERKPCAPLEIAIKGMLPKGPLGRNLFRNLKVFSGSEHTLKAQNPIKL</sequence>
<proteinExistence type="evidence at protein level"/>
<reference key="1">
    <citation type="journal article" date="1997" name="Nature">
        <title>Genomic sequence of a Lyme disease spirochaete, Borrelia burgdorferi.</title>
        <authorList>
            <person name="Fraser C.M."/>
            <person name="Casjens S."/>
            <person name="Huang W.M."/>
            <person name="Sutton G.G."/>
            <person name="Clayton R.A."/>
            <person name="Lathigra R."/>
            <person name="White O."/>
            <person name="Ketchum K.A."/>
            <person name="Dodson R.J."/>
            <person name="Hickey E.K."/>
            <person name="Gwinn M.L."/>
            <person name="Dougherty B.A."/>
            <person name="Tomb J.-F."/>
            <person name="Fleischmann R.D."/>
            <person name="Richardson D.L."/>
            <person name="Peterson J.D."/>
            <person name="Kerlavage A.R."/>
            <person name="Quackenbush J."/>
            <person name="Salzberg S.L."/>
            <person name="Hanson M."/>
            <person name="van Vugt R."/>
            <person name="Palmer N."/>
            <person name="Adams M.D."/>
            <person name="Gocayne J.D."/>
            <person name="Weidman J.F."/>
            <person name="Utterback T.R."/>
            <person name="Watthey L."/>
            <person name="McDonald L.A."/>
            <person name="Artiach P."/>
            <person name="Bowman C."/>
            <person name="Garland S.A."/>
            <person name="Fujii C."/>
            <person name="Cotton M.D."/>
            <person name="Horst K."/>
            <person name="Roberts K.M."/>
            <person name="Hatch B."/>
            <person name="Smith H.O."/>
            <person name="Venter J.C."/>
        </authorList>
    </citation>
    <scope>NUCLEOTIDE SEQUENCE [LARGE SCALE GENOMIC DNA]</scope>
    <source>
        <strain>ATCC 35210 / DSM 4680 / CIP 102532 / B31</strain>
    </source>
</reference>
<organism>
    <name type="scientific">Borreliella burgdorferi (strain ATCC 35210 / DSM 4680 / CIP 102532 / B31)</name>
    <name type="common">Borrelia burgdorferi</name>
    <dbReference type="NCBI Taxonomy" id="224326"/>
    <lineage>
        <taxon>Bacteria</taxon>
        <taxon>Pseudomonadati</taxon>
        <taxon>Spirochaetota</taxon>
        <taxon>Spirochaetia</taxon>
        <taxon>Spirochaetales</taxon>
        <taxon>Borreliaceae</taxon>
        <taxon>Borreliella</taxon>
    </lineage>
</organism>
<name>RL13_BORBU</name>
<gene>
    <name evidence="1" type="primary">rplM</name>
    <name type="ordered locus">BB_0339</name>
</gene>
<evidence type="ECO:0000255" key="1">
    <source>
        <dbReference type="HAMAP-Rule" id="MF_01366"/>
    </source>
</evidence>
<evidence type="ECO:0000305" key="2"/>
<evidence type="ECO:0007829" key="3">
    <source>
        <dbReference type="PDB" id="8FN2"/>
    </source>
</evidence>
<dbReference type="EMBL" id="AE000783">
    <property type="protein sequence ID" value="AAC66717.1"/>
    <property type="molecule type" value="Genomic_DNA"/>
</dbReference>
<dbReference type="PIR" id="B70142">
    <property type="entry name" value="B70142"/>
</dbReference>
<dbReference type="RefSeq" id="NP_212473.1">
    <property type="nucleotide sequence ID" value="NC_001318.1"/>
</dbReference>
<dbReference type="RefSeq" id="WP_002556936.1">
    <property type="nucleotide sequence ID" value="NC_001318.1"/>
</dbReference>
<dbReference type="PDB" id="8FMW">
    <property type="method" value="EM"/>
    <property type="resolution" value="2.86 A"/>
    <property type="chains" value="AL=2-146"/>
</dbReference>
<dbReference type="PDB" id="8FN2">
    <property type="method" value="EM"/>
    <property type="resolution" value="3.40 A"/>
    <property type="chains" value="L=2-146"/>
</dbReference>
<dbReference type="PDBsum" id="8FMW"/>
<dbReference type="PDBsum" id="8FN2"/>
<dbReference type="EMDB" id="EMD-29298"/>
<dbReference type="EMDB" id="EMD-29304"/>
<dbReference type="SMR" id="O51314"/>
<dbReference type="STRING" id="224326.BB_0339"/>
<dbReference type="PaxDb" id="224326-BB_0339"/>
<dbReference type="EnsemblBacteria" id="AAC66717">
    <property type="protein sequence ID" value="AAC66717"/>
    <property type="gene ID" value="BB_0339"/>
</dbReference>
<dbReference type="GeneID" id="56567768"/>
<dbReference type="KEGG" id="bbu:BB_0339"/>
<dbReference type="PATRIC" id="fig|224326.49.peg.735"/>
<dbReference type="HOGENOM" id="CLU_082184_2_2_12"/>
<dbReference type="OrthoDB" id="9801330at2"/>
<dbReference type="Proteomes" id="UP000001807">
    <property type="component" value="Chromosome"/>
</dbReference>
<dbReference type="GO" id="GO:0022625">
    <property type="term" value="C:cytosolic large ribosomal subunit"/>
    <property type="evidence" value="ECO:0007669"/>
    <property type="project" value="TreeGrafter"/>
</dbReference>
<dbReference type="GO" id="GO:0003729">
    <property type="term" value="F:mRNA binding"/>
    <property type="evidence" value="ECO:0007669"/>
    <property type="project" value="TreeGrafter"/>
</dbReference>
<dbReference type="GO" id="GO:0003735">
    <property type="term" value="F:structural constituent of ribosome"/>
    <property type="evidence" value="ECO:0007669"/>
    <property type="project" value="InterPro"/>
</dbReference>
<dbReference type="GO" id="GO:0017148">
    <property type="term" value="P:negative regulation of translation"/>
    <property type="evidence" value="ECO:0007669"/>
    <property type="project" value="TreeGrafter"/>
</dbReference>
<dbReference type="GO" id="GO:0006412">
    <property type="term" value="P:translation"/>
    <property type="evidence" value="ECO:0007669"/>
    <property type="project" value="UniProtKB-UniRule"/>
</dbReference>
<dbReference type="CDD" id="cd00392">
    <property type="entry name" value="Ribosomal_L13"/>
    <property type="match status" value="1"/>
</dbReference>
<dbReference type="Gene3D" id="3.90.1180.10">
    <property type="entry name" value="Ribosomal protein L13"/>
    <property type="match status" value="1"/>
</dbReference>
<dbReference type="HAMAP" id="MF_01366">
    <property type="entry name" value="Ribosomal_uL13"/>
    <property type="match status" value="1"/>
</dbReference>
<dbReference type="InterPro" id="IPR005822">
    <property type="entry name" value="Ribosomal_uL13"/>
</dbReference>
<dbReference type="InterPro" id="IPR005823">
    <property type="entry name" value="Ribosomal_uL13_bac-type"/>
</dbReference>
<dbReference type="InterPro" id="IPR023563">
    <property type="entry name" value="Ribosomal_uL13_CS"/>
</dbReference>
<dbReference type="InterPro" id="IPR036899">
    <property type="entry name" value="Ribosomal_uL13_sf"/>
</dbReference>
<dbReference type="NCBIfam" id="TIGR01066">
    <property type="entry name" value="rplM_bact"/>
    <property type="match status" value="1"/>
</dbReference>
<dbReference type="PANTHER" id="PTHR11545:SF2">
    <property type="entry name" value="LARGE RIBOSOMAL SUBUNIT PROTEIN UL13M"/>
    <property type="match status" value="1"/>
</dbReference>
<dbReference type="PANTHER" id="PTHR11545">
    <property type="entry name" value="RIBOSOMAL PROTEIN L13"/>
    <property type="match status" value="1"/>
</dbReference>
<dbReference type="Pfam" id="PF00572">
    <property type="entry name" value="Ribosomal_L13"/>
    <property type="match status" value="1"/>
</dbReference>
<dbReference type="PIRSF" id="PIRSF002181">
    <property type="entry name" value="Ribosomal_L13"/>
    <property type="match status" value="1"/>
</dbReference>
<dbReference type="SUPFAM" id="SSF52161">
    <property type="entry name" value="Ribosomal protein L13"/>
    <property type="match status" value="1"/>
</dbReference>
<dbReference type="PROSITE" id="PS00783">
    <property type="entry name" value="RIBOSOMAL_L13"/>
    <property type="match status" value="1"/>
</dbReference>
<accession>O51314</accession>
<protein>
    <recommendedName>
        <fullName evidence="1">Large ribosomal subunit protein uL13</fullName>
    </recommendedName>
    <alternativeName>
        <fullName evidence="2">50S ribosomal protein L13</fullName>
    </alternativeName>
</protein>